<evidence type="ECO:0000255" key="1">
    <source>
        <dbReference type="HAMAP-Rule" id="MF_01405"/>
    </source>
</evidence>
<feature type="chain" id="PRO_0000178162" description="dITP/XTP pyrophosphatase">
    <location>
        <begin position="1"/>
        <end position="207"/>
    </location>
</feature>
<feature type="active site" description="Proton acceptor" evidence="1">
    <location>
        <position position="72"/>
    </location>
</feature>
<feature type="binding site" evidence="1">
    <location>
        <begin position="10"/>
        <end position="15"/>
    </location>
    <ligand>
        <name>substrate</name>
    </ligand>
</feature>
<feature type="binding site" evidence="1">
    <location>
        <position position="43"/>
    </location>
    <ligand>
        <name>Mg(2+)</name>
        <dbReference type="ChEBI" id="CHEBI:18420"/>
    </ligand>
</feature>
<feature type="binding site" evidence="1">
    <location>
        <position position="72"/>
    </location>
    <ligand>
        <name>Mg(2+)</name>
        <dbReference type="ChEBI" id="CHEBI:18420"/>
    </ligand>
</feature>
<feature type="binding site" evidence="1">
    <location>
        <position position="73"/>
    </location>
    <ligand>
        <name>substrate</name>
    </ligand>
</feature>
<feature type="binding site" evidence="1">
    <location>
        <begin position="161"/>
        <end position="164"/>
    </location>
    <ligand>
        <name>substrate</name>
    </ligand>
</feature>
<feature type="binding site" evidence="1">
    <location>
        <position position="184"/>
    </location>
    <ligand>
        <name>substrate</name>
    </ligand>
</feature>
<feature type="binding site" evidence="1">
    <location>
        <begin position="189"/>
        <end position="190"/>
    </location>
    <ligand>
        <name>substrate</name>
    </ligand>
</feature>
<name>IXTPA_NITV2</name>
<organism>
    <name type="scientific">Nitratidesulfovibrio vulgaris (strain ATCC 29579 / DSM 644 / CCUG 34227 / NCIMB 8303 / VKM B-1760 / Hildenborough)</name>
    <name type="common">Desulfovibrio vulgaris</name>
    <dbReference type="NCBI Taxonomy" id="882"/>
    <lineage>
        <taxon>Bacteria</taxon>
        <taxon>Pseudomonadati</taxon>
        <taxon>Thermodesulfobacteriota</taxon>
        <taxon>Desulfovibrionia</taxon>
        <taxon>Desulfovibrionales</taxon>
        <taxon>Desulfovibrionaceae</taxon>
        <taxon>Nitratidesulfovibrio</taxon>
    </lineage>
</organism>
<protein>
    <recommendedName>
        <fullName evidence="1">dITP/XTP pyrophosphatase</fullName>
        <ecNumber evidence="1">3.6.1.66</ecNumber>
    </recommendedName>
    <alternativeName>
        <fullName evidence="1">Non-canonical purine NTP pyrophosphatase</fullName>
    </alternativeName>
    <alternativeName>
        <fullName evidence="1">Non-standard purine NTP pyrophosphatase</fullName>
    </alternativeName>
    <alternativeName>
        <fullName evidence="1">Nucleoside-triphosphate diphosphatase</fullName>
    </alternativeName>
    <alternativeName>
        <fullName evidence="1">Nucleoside-triphosphate pyrophosphatase</fullName>
        <shortName evidence="1">NTPase</shortName>
    </alternativeName>
</protein>
<accession>Q726F4</accession>
<keyword id="KW-0378">Hydrolase</keyword>
<keyword id="KW-0460">Magnesium</keyword>
<keyword id="KW-0479">Metal-binding</keyword>
<keyword id="KW-0546">Nucleotide metabolism</keyword>
<keyword id="KW-0547">Nucleotide-binding</keyword>
<keyword id="KW-1185">Reference proteome</keyword>
<proteinExistence type="inferred from homology"/>
<dbReference type="EC" id="3.6.1.66" evidence="1"/>
<dbReference type="EMBL" id="AE017285">
    <property type="protein sequence ID" value="AAS97624.1"/>
    <property type="molecule type" value="Genomic_DNA"/>
</dbReference>
<dbReference type="RefSeq" id="WP_010940412.1">
    <property type="nucleotide sequence ID" value="NC_002937.3"/>
</dbReference>
<dbReference type="RefSeq" id="YP_012364.1">
    <property type="nucleotide sequence ID" value="NC_002937.3"/>
</dbReference>
<dbReference type="SMR" id="Q726F4"/>
<dbReference type="STRING" id="882.DVU_3154"/>
<dbReference type="PaxDb" id="882-DVU_3154"/>
<dbReference type="EnsemblBacteria" id="AAS97624">
    <property type="protein sequence ID" value="AAS97624"/>
    <property type="gene ID" value="DVU_3154"/>
</dbReference>
<dbReference type="KEGG" id="dvu:DVU_3154"/>
<dbReference type="PATRIC" id="fig|882.5.peg.2859"/>
<dbReference type="eggNOG" id="COG0127">
    <property type="taxonomic scope" value="Bacteria"/>
</dbReference>
<dbReference type="HOGENOM" id="CLU_082080_0_1_7"/>
<dbReference type="OrthoDB" id="9807456at2"/>
<dbReference type="PhylomeDB" id="Q726F4"/>
<dbReference type="Proteomes" id="UP000002194">
    <property type="component" value="Chromosome"/>
</dbReference>
<dbReference type="GO" id="GO:0005829">
    <property type="term" value="C:cytosol"/>
    <property type="evidence" value="ECO:0007669"/>
    <property type="project" value="TreeGrafter"/>
</dbReference>
<dbReference type="GO" id="GO:0035870">
    <property type="term" value="F:dITP diphosphatase activity"/>
    <property type="evidence" value="ECO:0007669"/>
    <property type="project" value="RHEA"/>
</dbReference>
<dbReference type="GO" id="GO:0036220">
    <property type="term" value="F:ITP diphosphatase activity"/>
    <property type="evidence" value="ECO:0007669"/>
    <property type="project" value="UniProtKB-EC"/>
</dbReference>
<dbReference type="GO" id="GO:0046872">
    <property type="term" value="F:metal ion binding"/>
    <property type="evidence" value="ECO:0007669"/>
    <property type="project" value="UniProtKB-KW"/>
</dbReference>
<dbReference type="GO" id="GO:0000166">
    <property type="term" value="F:nucleotide binding"/>
    <property type="evidence" value="ECO:0007669"/>
    <property type="project" value="UniProtKB-KW"/>
</dbReference>
<dbReference type="GO" id="GO:0017111">
    <property type="term" value="F:ribonucleoside triphosphate phosphatase activity"/>
    <property type="evidence" value="ECO:0007669"/>
    <property type="project" value="InterPro"/>
</dbReference>
<dbReference type="GO" id="GO:0036222">
    <property type="term" value="F:XTP diphosphatase activity"/>
    <property type="evidence" value="ECO:0007669"/>
    <property type="project" value="RHEA"/>
</dbReference>
<dbReference type="GO" id="GO:0009117">
    <property type="term" value="P:nucleotide metabolic process"/>
    <property type="evidence" value="ECO:0007669"/>
    <property type="project" value="UniProtKB-KW"/>
</dbReference>
<dbReference type="GO" id="GO:0009146">
    <property type="term" value="P:purine nucleoside triphosphate catabolic process"/>
    <property type="evidence" value="ECO:0007669"/>
    <property type="project" value="UniProtKB-UniRule"/>
</dbReference>
<dbReference type="CDD" id="cd00515">
    <property type="entry name" value="HAM1"/>
    <property type="match status" value="1"/>
</dbReference>
<dbReference type="FunFam" id="3.90.950.10:FF:000001">
    <property type="entry name" value="dITP/XTP pyrophosphatase"/>
    <property type="match status" value="1"/>
</dbReference>
<dbReference type="Gene3D" id="3.90.950.10">
    <property type="match status" value="1"/>
</dbReference>
<dbReference type="HAMAP" id="MF_01405">
    <property type="entry name" value="Non_canon_purine_NTPase"/>
    <property type="match status" value="1"/>
</dbReference>
<dbReference type="InterPro" id="IPR020922">
    <property type="entry name" value="dITP/XTP_pyrophosphatase"/>
</dbReference>
<dbReference type="InterPro" id="IPR029001">
    <property type="entry name" value="ITPase-like_fam"/>
</dbReference>
<dbReference type="InterPro" id="IPR002637">
    <property type="entry name" value="RdgB/HAM1"/>
</dbReference>
<dbReference type="NCBIfam" id="TIGR00042">
    <property type="entry name" value="RdgB/HAM1 family non-canonical purine NTP pyrophosphatase"/>
    <property type="match status" value="1"/>
</dbReference>
<dbReference type="PANTHER" id="PTHR11067:SF9">
    <property type="entry name" value="INOSINE TRIPHOSPHATE PYROPHOSPHATASE"/>
    <property type="match status" value="1"/>
</dbReference>
<dbReference type="PANTHER" id="PTHR11067">
    <property type="entry name" value="INOSINE TRIPHOSPHATE PYROPHOSPHATASE/HAM1 PROTEIN"/>
    <property type="match status" value="1"/>
</dbReference>
<dbReference type="Pfam" id="PF01725">
    <property type="entry name" value="Ham1p_like"/>
    <property type="match status" value="1"/>
</dbReference>
<dbReference type="SUPFAM" id="SSF52972">
    <property type="entry name" value="ITPase-like"/>
    <property type="match status" value="1"/>
</dbReference>
<sequence>MTKATIVLATRNAGKVAELADALRAYGLDVLGLDAFPQVGEIEETGTTFEENALLKARAVAEATGHVAVADDSGLEVDALERRPGVYSARYSDDTPDLPGDTRDARNNAKLLLELDGVPAERRTARFRCVMAACTPDGRHVFAEGAWEGHIALAPEGDNGFGYDPLFIDPQSGLHSAQLSRDEKNARSHRGKALRRLLELWPAFWRG</sequence>
<gene>
    <name type="ordered locus">DVU_3154</name>
</gene>
<reference key="1">
    <citation type="journal article" date="2004" name="Nat. Biotechnol.">
        <title>The genome sequence of the anaerobic, sulfate-reducing bacterium Desulfovibrio vulgaris Hildenborough.</title>
        <authorList>
            <person name="Heidelberg J.F."/>
            <person name="Seshadri R."/>
            <person name="Haveman S.A."/>
            <person name="Hemme C.L."/>
            <person name="Paulsen I.T."/>
            <person name="Kolonay J.F."/>
            <person name="Eisen J.A."/>
            <person name="Ward N.L."/>
            <person name="Methe B.A."/>
            <person name="Brinkac L.M."/>
            <person name="Daugherty S.C."/>
            <person name="DeBoy R.T."/>
            <person name="Dodson R.J."/>
            <person name="Durkin A.S."/>
            <person name="Madupu R."/>
            <person name="Nelson W.C."/>
            <person name="Sullivan S.A."/>
            <person name="Fouts D.E."/>
            <person name="Haft D.H."/>
            <person name="Selengut J."/>
            <person name="Peterson J.D."/>
            <person name="Davidsen T.M."/>
            <person name="Zafar N."/>
            <person name="Zhou L."/>
            <person name="Radune D."/>
            <person name="Dimitrov G."/>
            <person name="Hance M."/>
            <person name="Tran K."/>
            <person name="Khouri H.M."/>
            <person name="Gill J."/>
            <person name="Utterback T.R."/>
            <person name="Feldblyum T.V."/>
            <person name="Wall J.D."/>
            <person name="Voordouw G."/>
            <person name="Fraser C.M."/>
        </authorList>
    </citation>
    <scope>NUCLEOTIDE SEQUENCE [LARGE SCALE GENOMIC DNA]</scope>
    <source>
        <strain>ATCC 29579 / DSM 644 / CCUG 34227 / NCIMB 8303 / VKM B-1760 / Hildenborough</strain>
    </source>
</reference>
<comment type="function">
    <text evidence="1">Pyrophosphatase that catalyzes the hydrolysis of nucleoside triphosphates to their monophosphate derivatives, with a high preference for the non-canonical purine nucleotides XTP (xanthosine triphosphate), dITP (deoxyinosine triphosphate) and ITP. Seems to function as a house-cleaning enzyme that removes non-canonical purine nucleotides from the nucleotide pool, thus preventing their incorporation into DNA/RNA and avoiding chromosomal lesions.</text>
</comment>
<comment type="catalytic activity">
    <reaction evidence="1">
        <text>XTP + H2O = XMP + diphosphate + H(+)</text>
        <dbReference type="Rhea" id="RHEA:28610"/>
        <dbReference type="ChEBI" id="CHEBI:15377"/>
        <dbReference type="ChEBI" id="CHEBI:15378"/>
        <dbReference type="ChEBI" id="CHEBI:33019"/>
        <dbReference type="ChEBI" id="CHEBI:57464"/>
        <dbReference type="ChEBI" id="CHEBI:61314"/>
        <dbReference type="EC" id="3.6.1.66"/>
    </reaction>
</comment>
<comment type="catalytic activity">
    <reaction evidence="1">
        <text>dITP + H2O = dIMP + diphosphate + H(+)</text>
        <dbReference type="Rhea" id="RHEA:28342"/>
        <dbReference type="ChEBI" id="CHEBI:15377"/>
        <dbReference type="ChEBI" id="CHEBI:15378"/>
        <dbReference type="ChEBI" id="CHEBI:33019"/>
        <dbReference type="ChEBI" id="CHEBI:61194"/>
        <dbReference type="ChEBI" id="CHEBI:61382"/>
        <dbReference type="EC" id="3.6.1.66"/>
    </reaction>
</comment>
<comment type="catalytic activity">
    <reaction evidence="1">
        <text>ITP + H2O = IMP + diphosphate + H(+)</text>
        <dbReference type="Rhea" id="RHEA:29399"/>
        <dbReference type="ChEBI" id="CHEBI:15377"/>
        <dbReference type="ChEBI" id="CHEBI:15378"/>
        <dbReference type="ChEBI" id="CHEBI:33019"/>
        <dbReference type="ChEBI" id="CHEBI:58053"/>
        <dbReference type="ChEBI" id="CHEBI:61402"/>
        <dbReference type="EC" id="3.6.1.66"/>
    </reaction>
</comment>
<comment type="cofactor">
    <cofactor evidence="1">
        <name>Mg(2+)</name>
        <dbReference type="ChEBI" id="CHEBI:18420"/>
    </cofactor>
    <text evidence="1">Binds 1 Mg(2+) ion per subunit.</text>
</comment>
<comment type="subunit">
    <text evidence="1">Homodimer.</text>
</comment>
<comment type="similarity">
    <text evidence="1">Belongs to the HAM1 NTPase family.</text>
</comment>